<organism>
    <name type="scientific">Salmonella typhimurium (strain LT2 / SGSC1412 / ATCC 700720)</name>
    <dbReference type="NCBI Taxonomy" id="99287"/>
    <lineage>
        <taxon>Bacteria</taxon>
        <taxon>Pseudomonadati</taxon>
        <taxon>Pseudomonadota</taxon>
        <taxon>Gammaproteobacteria</taxon>
        <taxon>Enterobacterales</taxon>
        <taxon>Enterobacteriaceae</taxon>
        <taxon>Salmonella</taxon>
    </lineage>
</organism>
<comment type="function">
    <text evidence="1">Catalyzes the conversion of pppGpp to ppGpp. Guanosine pentaphosphate (pppGpp) is a cytoplasmic signaling molecule which together with ppGpp controls the 'stringent response', an adaptive process that allows bacteria to respond to amino acid starvation, resulting in the coordinated regulation of numerous cellular activities.</text>
</comment>
<comment type="catalytic activity">
    <reaction evidence="1">
        <text>guanosine 3'-diphosphate 5'-triphosphate + H2O = guanosine 3',5'-bis(diphosphate) + phosphate + H(+)</text>
        <dbReference type="Rhea" id="RHEA:13073"/>
        <dbReference type="ChEBI" id="CHEBI:15377"/>
        <dbReference type="ChEBI" id="CHEBI:15378"/>
        <dbReference type="ChEBI" id="CHEBI:43474"/>
        <dbReference type="ChEBI" id="CHEBI:77828"/>
        <dbReference type="ChEBI" id="CHEBI:142410"/>
        <dbReference type="EC" id="3.6.1.40"/>
    </reaction>
</comment>
<comment type="pathway">
    <text evidence="1">Purine metabolism; ppGpp biosynthesis; ppGpp from GTP: step 2/2.</text>
</comment>
<comment type="similarity">
    <text evidence="1">Belongs to the GppA/Ppx family. GppA subfamily.</text>
</comment>
<name>GPPA_SALTY</name>
<reference key="1">
    <citation type="journal article" date="2001" name="Nature">
        <title>Complete genome sequence of Salmonella enterica serovar Typhimurium LT2.</title>
        <authorList>
            <person name="McClelland M."/>
            <person name="Sanderson K.E."/>
            <person name="Spieth J."/>
            <person name="Clifton S.W."/>
            <person name="Latreille P."/>
            <person name="Courtney L."/>
            <person name="Porwollik S."/>
            <person name="Ali J."/>
            <person name="Dante M."/>
            <person name="Du F."/>
            <person name="Hou S."/>
            <person name="Layman D."/>
            <person name="Leonard S."/>
            <person name="Nguyen C."/>
            <person name="Scott K."/>
            <person name="Holmes A."/>
            <person name="Grewal N."/>
            <person name="Mulvaney E."/>
            <person name="Ryan E."/>
            <person name="Sun H."/>
            <person name="Florea L."/>
            <person name="Miller W."/>
            <person name="Stoneking T."/>
            <person name="Nhan M."/>
            <person name="Waterston R."/>
            <person name="Wilson R.K."/>
        </authorList>
    </citation>
    <scope>NUCLEOTIDE SEQUENCE [LARGE SCALE GENOMIC DNA]</scope>
    <source>
        <strain>LT2 / SGSC1412 / ATCC 700720</strain>
    </source>
</reference>
<evidence type="ECO:0000255" key="1">
    <source>
        <dbReference type="HAMAP-Rule" id="MF_01550"/>
    </source>
</evidence>
<proteinExistence type="inferred from homology"/>
<gene>
    <name evidence="1" type="primary">gppA</name>
    <name type="ordered locus">STM3913</name>
    <name type="ORF">STMD1.78</name>
</gene>
<dbReference type="EC" id="3.6.1.40" evidence="1"/>
<dbReference type="EMBL" id="AF233324">
    <property type="protein sequence ID" value="AAF33473.1"/>
    <property type="molecule type" value="Genomic_DNA"/>
</dbReference>
<dbReference type="EMBL" id="AE006468">
    <property type="protein sequence ID" value="AAL22763.1"/>
    <property type="molecule type" value="Genomic_DNA"/>
</dbReference>
<dbReference type="RefSeq" id="NP_462804.1">
    <property type="nucleotide sequence ID" value="NC_003197.2"/>
</dbReference>
<dbReference type="RefSeq" id="WP_001089447.1">
    <property type="nucleotide sequence ID" value="NC_003197.2"/>
</dbReference>
<dbReference type="SMR" id="P0A267"/>
<dbReference type="STRING" id="99287.STM3913"/>
<dbReference type="PaxDb" id="99287-STM3913"/>
<dbReference type="GeneID" id="1255439"/>
<dbReference type="KEGG" id="stm:STM3913"/>
<dbReference type="PATRIC" id="fig|99287.12.peg.4135"/>
<dbReference type="HOGENOM" id="CLU_025908_4_0_6"/>
<dbReference type="OMA" id="WQICVGA"/>
<dbReference type="PhylomeDB" id="P0A267"/>
<dbReference type="BioCyc" id="SENT99287:STM3913-MONOMER"/>
<dbReference type="UniPathway" id="UPA00908">
    <property type="reaction ID" value="UER00885"/>
</dbReference>
<dbReference type="Proteomes" id="UP000001014">
    <property type="component" value="Chromosome"/>
</dbReference>
<dbReference type="GO" id="GO:0008894">
    <property type="term" value="F:guanosine-5'-triphosphate,3'-diphosphate diphosphatase activity"/>
    <property type="evidence" value="ECO:0000318"/>
    <property type="project" value="GO_Central"/>
</dbReference>
<dbReference type="GO" id="GO:0015974">
    <property type="term" value="P:guanosine pentaphosphate catabolic process"/>
    <property type="evidence" value="ECO:0007669"/>
    <property type="project" value="InterPro"/>
</dbReference>
<dbReference type="GO" id="GO:0015970">
    <property type="term" value="P:guanosine tetraphosphate biosynthetic process"/>
    <property type="evidence" value="ECO:0007669"/>
    <property type="project" value="UniProtKB-UniRule"/>
</dbReference>
<dbReference type="GO" id="GO:0015949">
    <property type="term" value="P:nucleobase-containing small molecule interconversion"/>
    <property type="evidence" value="ECO:0000318"/>
    <property type="project" value="GO_Central"/>
</dbReference>
<dbReference type="CDD" id="cd24117">
    <property type="entry name" value="ASKHA_NBD_EcGppA-like"/>
    <property type="match status" value="1"/>
</dbReference>
<dbReference type="FunFam" id="1.10.3210.10:FF:000004">
    <property type="entry name" value="Guanosine-5'-triphosphate,3'-diphosphate pyrophosphatase"/>
    <property type="match status" value="1"/>
</dbReference>
<dbReference type="FunFam" id="3.30.420.150:FF:000001">
    <property type="entry name" value="Guanosine-5'-triphosphate,3'-diphosphate pyrophosphatase"/>
    <property type="match status" value="1"/>
</dbReference>
<dbReference type="FunFam" id="3.30.420.40:FF:000023">
    <property type="entry name" value="Guanosine-5'-triphosphate,3'-diphosphate pyrophosphatase"/>
    <property type="match status" value="1"/>
</dbReference>
<dbReference type="Gene3D" id="3.30.420.40">
    <property type="match status" value="1"/>
</dbReference>
<dbReference type="Gene3D" id="3.30.420.150">
    <property type="entry name" value="Exopolyphosphatase. Domain 2"/>
    <property type="match status" value="1"/>
</dbReference>
<dbReference type="Gene3D" id="1.10.3210.10">
    <property type="entry name" value="Hypothetical protein af1432"/>
    <property type="match status" value="1"/>
</dbReference>
<dbReference type="HAMAP" id="MF_01550">
    <property type="entry name" value="GppA"/>
    <property type="match status" value="1"/>
</dbReference>
<dbReference type="InterPro" id="IPR043129">
    <property type="entry name" value="ATPase_NBD"/>
</dbReference>
<dbReference type="InterPro" id="IPR050273">
    <property type="entry name" value="GppA/Ppx_hydrolase"/>
</dbReference>
<dbReference type="InterPro" id="IPR023709">
    <property type="entry name" value="Guo-5TP_3DP_PyrP"/>
</dbReference>
<dbReference type="InterPro" id="IPR048950">
    <property type="entry name" value="Ppx_GppA_C"/>
</dbReference>
<dbReference type="InterPro" id="IPR003695">
    <property type="entry name" value="Ppx_GppA_N"/>
</dbReference>
<dbReference type="InterPro" id="IPR030673">
    <property type="entry name" value="PyroPPase_GppA_Ppx"/>
</dbReference>
<dbReference type="NCBIfam" id="NF008260">
    <property type="entry name" value="PRK11031.1"/>
    <property type="match status" value="1"/>
</dbReference>
<dbReference type="PANTHER" id="PTHR30005">
    <property type="entry name" value="EXOPOLYPHOSPHATASE"/>
    <property type="match status" value="1"/>
</dbReference>
<dbReference type="PANTHER" id="PTHR30005:SF0">
    <property type="entry name" value="RETROGRADE REGULATION PROTEIN 2"/>
    <property type="match status" value="1"/>
</dbReference>
<dbReference type="Pfam" id="PF02541">
    <property type="entry name" value="Ppx-GppA"/>
    <property type="match status" value="1"/>
</dbReference>
<dbReference type="Pfam" id="PF21447">
    <property type="entry name" value="Ppx-GppA_III"/>
    <property type="match status" value="1"/>
</dbReference>
<dbReference type="PIRSF" id="PIRSF001267">
    <property type="entry name" value="Pyrophosphatase_GppA_Ppx"/>
    <property type="match status" value="1"/>
</dbReference>
<dbReference type="SUPFAM" id="SSF53067">
    <property type="entry name" value="Actin-like ATPase domain"/>
    <property type="match status" value="2"/>
</dbReference>
<dbReference type="SUPFAM" id="SSF109604">
    <property type="entry name" value="HD-domain/PDEase-like"/>
    <property type="match status" value="1"/>
</dbReference>
<sequence length="493" mass="54816">MNSTSLYAAIDLGSNSFHMLVVREAAGSIQTLTRIKRKVRLAAGLNNDNHLSAEAMERGWQCLRLFAERLQDIPQPQIRVVATATLRLAVNAGEFIAKAQTILGCPVQVISGEEEARLIYQGVAHTTGGADQRLVVDIGGASTELVTGTGAQTTSLFSLSMGCVTWLERYFSDRNLAQENFDDAEKAARDVLRPVADELRFHGWKVCVGASGTVQALQEIMMAQGMDERITLAKLQQLKQRAIQCGRLEELEIEGLTLERALVFPSGLAILIAIFTELNIQSMTLAGGALREGLVYGMLHLAVDQDIRSRTLRNIQRRFIVDTDQANRVAKLADNFLKQVENAWHIEPISRELLLSACQLHEIGLSVDFKQAPYHAAYLVRHLDLPGYTPAQKKLLATLLLNQTNPVDLSSLHQQNAVPPRVAEQLCRLLRLAILFAGRRRDDLVPEITLQALNENLTLTLPGDWLAHHPLGKELIDQESQWQSYVHWPLDVR</sequence>
<protein>
    <recommendedName>
        <fullName evidence="1">Guanosine-5'-triphosphate,3'-diphosphate pyrophosphatase</fullName>
        <ecNumber evidence="1">3.6.1.40</ecNumber>
    </recommendedName>
    <alternativeName>
        <fullName evidence="1">Guanosine pentaphosphate phosphohydrolase</fullName>
    </alternativeName>
    <alternativeName>
        <fullName evidence="1">pppGpp-5'-phosphohydrolase</fullName>
    </alternativeName>
</protein>
<feature type="chain" id="PRO_0000194289" description="Guanosine-5'-triphosphate,3'-diphosphate pyrophosphatase">
    <location>
        <begin position="1"/>
        <end position="493"/>
    </location>
</feature>
<keyword id="KW-0378">Hydrolase</keyword>
<keyword id="KW-1185">Reference proteome</keyword>
<accession>P0A267</accession>
<accession>Q9L6S0</accession>